<gene>
    <name type="primary">ygfA</name>
    <name type="ordered locus">b2912</name>
    <name type="ordered locus">JW2879</name>
</gene>
<evidence type="ECO:0000255" key="1"/>
<evidence type="ECO:0000256" key="2">
    <source>
        <dbReference type="SAM" id="MobiDB-lite"/>
    </source>
</evidence>
<evidence type="ECO:0000269" key="3">
    <source>
    </source>
</evidence>
<evidence type="ECO:0000269" key="4">
    <source>
    </source>
</evidence>
<evidence type="ECO:0000269" key="5">
    <source>
    </source>
</evidence>
<evidence type="ECO:0000303" key="6">
    <source>
    </source>
</evidence>
<evidence type="ECO:0000305" key="7"/>
<proteinExistence type="evidence at protein level"/>
<name>5FCL_ECOLI</name>
<feature type="chain" id="PRO_0000200284" description="5-formyltetrahydrofolate cyclo-ligase">
    <location>
        <begin position="1"/>
        <end position="182"/>
    </location>
</feature>
<feature type="region of interest" description="Disordered" evidence="2">
    <location>
        <begin position="1"/>
        <end position="21"/>
    </location>
</feature>
<feature type="compositionally biased region" description="Polar residues" evidence="2">
    <location>
        <begin position="11"/>
        <end position="21"/>
    </location>
</feature>
<feature type="binding site" evidence="1">
    <location>
        <begin position="128"/>
        <end position="135"/>
    </location>
    <ligand>
        <name>ATP</name>
        <dbReference type="ChEBI" id="CHEBI:30616"/>
    </ligand>
</feature>
<feature type="binding site" evidence="1">
    <location>
        <position position="167"/>
    </location>
    <ligand>
        <name>ATP</name>
        <dbReference type="ChEBI" id="CHEBI:30616"/>
    </ligand>
</feature>
<organism>
    <name type="scientific">Escherichia coli (strain K12)</name>
    <dbReference type="NCBI Taxonomy" id="83333"/>
    <lineage>
        <taxon>Bacteria</taxon>
        <taxon>Pseudomonadati</taxon>
        <taxon>Pseudomonadota</taxon>
        <taxon>Gammaproteobacteria</taxon>
        <taxon>Enterobacterales</taxon>
        <taxon>Enterobacteriaceae</taxon>
        <taxon>Escherichia</taxon>
    </lineage>
</organism>
<sequence length="182" mass="21105">MIRQRRRALTPEQQQEMGQQAATRMMTYPPVVMAHTVAVFLSFDGELDTQPLIEQLWRAGKRVYLPVLHPFSAGNLLFLNYHPQSELVMNRLKIHEPKLDVRDVLPLSRLDVLITPLVAFDEYGQRLGMGGGFYDRTLQNWQHYKTQPVGYAHDCQLVEKLPVEEWDIPLPAVVTPSKVWEW</sequence>
<accession>P0AC28</accession>
<accession>P09160</accession>
<accession>Q2M9T0</accession>
<protein>
    <recommendedName>
        <fullName>5-formyltetrahydrofolate cyclo-ligase</fullName>
        <shortName>5-FCL</shortName>
        <ecNumber evidence="4">6.3.3.2</ecNumber>
    </recommendedName>
    <alternativeName>
        <fullName>5,10-methenyltetrahydrofolate synthetase</fullName>
        <shortName>MTHFS</shortName>
    </alternativeName>
</protein>
<keyword id="KW-0067">ATP-binding</keyword>
<keyword id="KW-0436">Ligase</keyword>
<keyword id="KW-0547">Nucleotide-binding</keyword>
<keyword id="KW-1185">Reference proteome</keyword>
<comment type="function">
    <text evidence="3 4 6">Involved in the removal of 5-formyltetrahydrofolate. In vitro, it is a potent inhibitor of various folate-dependent enzymes in the C1 metabolism network and in vivo it might function as a folate storage. 5-formyltetrahydrofolate is also used as an antifolate rescue agent in cancer chemotherapy. Catalyzes the irreversible ATP-dependent transformation of 5-formyltetrahydrofolate (5-CHO-THF) to form 5,10-methenyltetrahydrofolate (5,10-CH=THF) (PubMed:20952389). The reverse reaction is catalyzed by the serine hydroxymethyltransferase GlyA (SHMT) (PubMed:20952389).</text>
</comment>
<comment type="catalytic activity">
    <reaction evidence="4">
        <text>(6S)-5-formyl-5,6,7,8-tetrahydrofolate + ATP = (6R)-5,10-methenyltetrahydrofolate + ADP + phosphate</text>
        <dbReference type="Rhea" id="RHEA:10488"/>
        <dbReference type="ChEBI" id="CHEBI:30616"/>
        <dbReference type="ChEBI" id="CHEBI:43474"/>
        <dbReference type="ChEBI" id="CHEBI:57455"/>
        <dbReference type="ChEBI" id="CHEBI:57457"/>
        <dbReference type="ChEBI" id="CHEBI:456216"/>
        <dbReference type="EC" id="6.3.3.2"/>
    </reaction>
    <physiologicalReaction direction="left-to-right" evidence="4">
        <dbReference type="Rhea" id="RHEA:10489"/>
    </physiologicalReaction>
</comment>
<comment type="interaction">
    <interactant intactId="EBI-555094">
        <id>P0AC28</id>
    </interactant>
    <interactant intactId="EBI-370139">
        <id>P0A763</id>
        <label>ndk</label>
    </interactant>
    <organismsDiffer>false</organismsDiffer>
    <experiments>5</experiments>
</comment>
<comment type="induction">
    <text evidence="5">During biofilm formation.</text>
</comment>
<comment type="disruption phenotype">
    <text evidence="4">Cells lacking this gene does not cause a growth defect in rich or minimal medium. However, when grown in minimal medium with added glycine, the mutant accumulates 5-CHO-THF. If the only nitrogen source in minimal medium is glycine, the mutant shows a severe growth defect, likely due to inhibition of serine hydroxymethyltransferase (SHMT) and the glycine cleavage system by the accumulated 5-CHO-THF. This phenotype can be complemented by the glutamate formiminotransferase (FT).</text>
</comment>
<comment type="similarity">
    <text evidence="7">Belongs to the 5-formyltetrahydrofolate cyclo-ligase family.</text>
</comment>
<reference key="1">
    <citation type="journal article" date="1985" name="J. Bacteriol.">
        <title>Escherichia coli 6S RNA gene is part of a dual-function transcription unit.</title>
        <authorList>
            <person name="Hsu L.M."/>
            <person name="Zagorski J."/>
            <person name="Wang Z."/>
            <person name="Fournier M.J."/>
        </authorList>
    </citation>
    <scope>NUCLEOTIDE SEQUENCE [GENOMIC DNA]</scope>
</reference>
<reference key="2">
    <citation type="journal article" date="1997" name="Science">
        <title>The complete genome sequence of Escherichia coli K-12.</title>
        <authorList>
            <person name="Blattner F.R."/>
            <person name="Plunkett G. III"/>
            <person name="Bloch C.A."/>
            <person name="Perna N.T."/>
            <person name="Burland V."/>
            <person name="Riley M."/>
            <person name="Collado-Vides J."/>
            <person name="Glasner J.D."/>
            <person name="Rode C.K."/>
            <person name="Mayhew G.F."/>
            <person name="Gregor J."/>
            <person name="Davis N.W."/>
            <person name="Kirkpatrick H.A."/>
            <person name="Goeden M.A."/>
            <person name="Rose D.J."/>
            <person name="Mau B."/>
            <person name="Shao Y."/>
        </authorList>
    </citation>
    <scope>NUCLEOTIDE SEQUENCE [LARGE SCALE GENOMIC DNA]</scope>
    <source>
        <strain>K12 / MG1655 / ATCC 47076</strain>
    </source>
</reference>
<reference key="3">
    <citation type="journal article" date="2006" name="Mol. Syst. Biol.">
        <title>Highly accurate genome sequences of Escherichia coli K-12 strains MG1655 and W3110.</title>
        <authorList>
            <person name="Hayashi K."/>
            <person name="Morooka N."/>
            <person name="Yamamoto Y."/>
            <person name="Fujita K."/>
            <person name="Isono K."/>
            <person name="Choi S."/>
            <person name="Ohtsubo E."/>
            <person name="Baba T."/>
            <person name="Wanner B.L."/>
            <person name="Mori H."/>
            <person name="Horiuchi T."/>
        </authorList>
    </citation>
    <scope>NUCLEOTIDE SEQUENCE [LARGE SCALE GENOMIC DNA]</scope>
    <source>
        <strain>K12 / W3110 / ATCC 27325 / DSM 5911</strain>
    </source>
</reference>
<reference key="4">
    <citation type="journal article" date="2008" name="Antimicrob. Agents Chemother.">
        <title>Role of global regulators and nucleotide metabolism in antibiotic tolerance in Escherichia coli.</title>
        <authorList>
            <person name="Hansen S."/>
            <person name="Lewis K."/>
            <person name="Vulic M."/>
        </authorList>
    </citation>
    <scope>FUNCTION</scope>
</reference>
<reference key="5">
    <citation type="journal article" date="2010" name="J. Biol. Chem.">
        <title>Moonlighting glutamate formiminotransferases can functionally replace 5-formyltetrahydrofolate cycloligase.</title>
        <authorList>
            <person name="Jeanguenin L."/>
            <person name="Lara-Nunez A."/>
            <person name="Pribat A."/>
            <person name="Mageroy M.H."/>
            <person name="Gregory J.F. III"/>
            <person name="Rice K.C."/>
            <person name="de Crecy-Lagard V."/>
            <person name="Hanson A.D."/>
        </authorList>
    </citation>
    <scope>FUNCTION</scope>
    <scope>DISRUPTION PHENOTYPE</scope>
    <scope>CATALYTIC ACTIVITY</scope>
    <source>
        <strain>K12 / MG1655 / ATCC 47076</strain>
    </source>
</reference>
<reference key="6">
    <citation type="journal article" date="2011" name="J. Biol. Chem.">
        <title>Rho-dependent termination of ssrS (6S RNA) transcription in Escherichia coli: implication for 3' processing of 6S RNA and expression of downstream ygfA (putative 5-formyl-tetrahydrofolate cyclo-ligase).</title>
        <authorList>
            <person name="Chae H."/>
            <person name="Han K."/>
            <person name="Kim K.S."/>
            <person name="Park H."/>
            <person name="Lee J."/>
            <person name="Lee Y."/>
        </authorList>
    </citation>
    <scope>INDUCTION</scope>
</reference>
<dbReference type="EC" id="6.3.3.2" evidence="4"/>
<dbReference type="EMBL" id="M12965">
    <property type="protein sequence ID" value="AAA24651.1"/>
    <property type="molecule type" value="Genomic_DNA"/>
</dbReference>
<dbReference type="EMBL" id="U28377">
    <property type="protein sequence ID" value="AAA69079.1"/>
    <property type="molecule type" value="Genomic_DNA"/>
</dbReference>
<dbReference type="EMBL" id="U00096">
    <property type="protein sequence ID" value="AAC75949.1"/>
    <property type="molecule type" value="Genomic_DNA"/>
</dbReference>
<dbReference type="EMBL" id="AP009048">
    <property type="protein sequence ID" value="BAE76976.1"/>
    <property type="molecule type" value="Genomic_DNA"/>
</dbReference>
<dbReference type="PIR" id="A21894">
    <property type="entry name" value="QQEC2K"/>
</dbReference>
<dbReference type="RefSeq" id="NP_417387.3">
    <property type="nucleotide sequence ID" value="NC_000913.3"/>
</dbReference>
<dbReference type="SMR" id="P0AC28"/>
<dbReference type="BioGRID" id="4261171">
    <property type="interactions" value="230"/>
</dbReference>
<dbReference type="DIP" id="DIP-48194N"/>
<dbReference type="FunCoup" id="P0AC28">
    <property type="interactions" value="520"/>
</dbReference>
<dbReference type="IntAct" id="P0AC28">
    <property type="interactions" value="9"/>
</dbReference>
<dbReference type="STRING" id="511145.b2912"/>
<dbReference type="PaxDb" id="511145-b2912"/>
<dbReference type="EnsemblBacteria" id="AAC75949">
    <property type="protein sequence ID" value="AAC75949"/>
    <property type="gene ID" value="b2912"/>
</dbReference>
<dbReference type="GeneID" id="945167"/>
<dbReference type="KEGG" id="ecj:JW2879"/>
<dbReference type="KEGG" id="eco:b2912"/>
<dbReference type="PATRIC" id="fig|511145.12.peg.3006"/>
<dbReference type="EchoBASE" id="EB1147"/>
<dbReference type="eggNOG" id="COG0212">
    <property type="taxonomic scope" value="Bacteria"/>
</dbReference>
<dbReference type="HOGENOM" id="CLU_066245_0_0_6"/>
<dbReference type="InParanoid" id="P0AC28"/>
<dbReference type="OMA" id="WGFPRCV"/>
<dbReference type="PhylomeDB" id="P0AC28"/>
<dbReference type="BioCyc" id="EcoCyc:EG11158-MONOMER"/>
<dbReference type="BioCyc" id="MetaCyc:EG11158-MONOMER"/>
<dbReference type="PRO" id="PR:P0AC28"/>
<dbReference type="Proteomes" id="UP000000625">
    <property type="component" value="Chromosome"/>
</dbReference>
<dbReference type="GO" id="GO:0005737">
    <property type="term" value="C:cytoplasm"/>
    <property type="evidence" value="ECO:0000318"/>
    <property type="project" value="GO_Central"/>
</dbReference>
<dbReference type="GO" id="GO:0030272">
    <property type="term" value="F:5-formyltetrahydrofolate cyclo-ligase activity"/>
    <property type="evidence" value="ECO:0000315"/>
    <property type="project" value="EcoCyc"/>
</dbReference>
<dbReference type="GO" id="GO:0005524">
    <property type="term" value="F:ATP binding"/>
    <property type="evidence" value="ECO:0007669"/>
    <property type="project" value="UniProtKB-KW"/>
</dbReference>
<dbReference type="GO" id="GO:0022611">
    <property type="term" value="P:dormancy process"/>
    <property type="evidence" value="ECO:0000315"/>
    <property type="project" value="EcoCyc"/>
</dbReference>
<dbReference type="GO" id="GO:0009396">
    <property type="term" value="P:folic acid-containing compound biosynthetic process"/>
    <property type="evidence" value="ECO:0000318"/>
    <property type="project" value="GO_Central"/>
</dbReference>
<dbReference type="GO" id="GO:0035999">
    <property type="term" value="P:tetrahydrofolate interconversion"/>
    <property type="evidence" value="ECO:0000318"/>
    <property type="project" value="GO_Central"/>
</dbReference>
<dbReference type="FunFam" id="3.40.50.10420:FF:000005">
    <property type="entry name" value="5-formyltetrahydrofolate cyclo-ligase"/>
    <property type="match status" value="1"/>
</dbReference>
<dbReference type="Gene3D" id="3.40.50.10420">
    <property type="entry name" value="NagB/RpiA/CoA transferase-like"/>
    <property type="match status" value="1"/>
</dbReference>
<dbReference type="InterPro" id="IPR002698">
    <property type="entry name" value="FTHF_cligase"/>
</dbReference>
<dbReference type="InterPro" id="IPR024185">
    <property type="entry name" value="FTHF_cligase-like_sf"/>
</dbReference>
<dbReference type="InterPro" id="IPR037171">
    <property type="entry name" value="NagB/RpiA_transferase-like"/>
</dbReference>
<dbReference type="NCBIfam" id="TIGR02727">
    <property type="entry name" value="MTHFS_bact"/>
    <property type="match status" value="1"/>
</dbReference>
<dbReference type="NCBIfam" id="NF007661">
    <property type="entry name" value="PRK10333.1"/>
    <property type="match status" value="1"/>
</dbReference>
<dbReference type="PANTHER" id="PTHR23407:SF1">
    <property type="entry name" value="5-FORMYLTETRAHYDROFOLATE CYCLO-LIGASE"/>
    <property type="match status" value="1"/>
</dbReference>
<dbReference type="PANTHER" id="PTHR23407">
    <property type="entry name" value="ATPASE INHIBITOR/5-FORMYLTETRAHYDROFOLATE CYCLO-LIGASE"/>
    <property type="match status" value="1"/>
</dbReference>
<dbReference type="Pfam" id="PF01812">
    <property type="entry name" value="5-FTHF_cyc-lig"/>
    <property type="match status" value="1"/>
</dbReference>
<dbReference type="PIRSF" id="PIRSF006806">
    <property type="entry name" value="FTHF_cligase"/>
    <property type="match status" value="1"/>
</dbReference>
<dbReference type="SUPFAM" id="SSF100950">
    <property type="entry name" value="NagB/RpiA/CoA transferase-like"/>
    <property type="match status" value="1"/>
</dbReference>